<comment type="function">
    <text evidence="1">Isomerase that catalyzes the conversion of deoxy-ribose 1-phosphate (dRib-1-P) and ribose 1-phosphate (Rib-1-P) to deoxy-ribose 5-phosphate (dRib-5-P) and ribose 5-phosphate (Rib-5-P), respectively.</text>
</comment>
<comment type="catalytic activity">
    <reaction evidence="1">
        <text>2-deoxy-alpha-D-ribose 1-phosphate = 2-deoxy-D-ribose 5-phosphate</text>
        <dbReference type="Rhea" id="RHEA:27658"/>
        <dbReference type="ChEBI" id="CHEBI:57259"/>
        <dbReference type="ChEBI" id="CHEBI:62877"/>
        <dbReference type="EC" id="5.4.2.7"/>
    </reaction>
</comment>
<comment type="catalytic activity">
    <reaction evidence="1">
        <text>alpha-D-ribose 1-phosphate = D-ribose 5-phosphate</text>
        <dbReference type="Rhea" id="RHEA:18793"/>
        <dbReference type="ChEBI" id="CHEBI:57720"/>
        <dbReference type="ChEBI" id="CHEBI:78346"/>
        <dbReference type="EC" id="5.4.2.7"/>
    </reaction>
</comment>
<comment type="cofactor">
    <cofactor evidence="1">
        <name>Mn(2+)</name>
        <dbReference type="ChEBI" id="CHEBI:29035"/>
    </cofactor>
    <text evidence="1">Binds 2 manganese ions.</text>
</comment>
<comment type="pathway">
    <text evidence="1">Carbohydrate degradation; 2-deoxy-D-ribose 1-phosphate degradation; D-glyceraldehyde 3-phosphate and acetaldehyde from 2-deoxy-alpha-D-ribose 1-phosphate: step 1/2.</text>
</comment>
<comment type="subcellular location">
    <subcellularLocation>
        <location evidence="1">Cytoplasm</location>
    </subcellularLocation>
</comment>
<comment type="similarity">
    <text evidence="1">Belongs to the phosphopentomutase family.</text>
</comment>
<gene>
    <name evidence="1" type="primary">deoB</name>
    <name type="ordered locus">SPD_0724</name>
</gene>
<proteinExistence type="inferred from homology"/>
<accession>Q04L81</accession>
<protein>
    <recommendedName>
        <fullName evidence="1">Phosphopentomutase</fullName>
        <ecNumber evidence="1">5.4.2.7</ecNumber>
    </recommendedName>
    <alternativeName>
        <fullName evidence="1">Phosphodeoxyribomutase</fullName>
    </alternativeName>
</protein>
<feature type="chain" id="PRO_1000046407" description="Phosphopentomutase">
    <location>
        <begin position="1"/>
        <end position="403"/>
    </location>
</feature>
<feature type="binding site" evidence="1">
    <location>
        <position position="13"/>
    </location>
    <ligand>
        <name>Mn(2+)</name>
        <dbReference type="ChEBI" id="CHEBI:29035"/>
        <label>1</label>
    </ligand>
</feature>
<feature type="binding site" evidence="1">
    <location>
        <position position="298"/>
    </location>
    <ligand>
        <name>Mn(2+)</name>
        <dbReference type="ChEBI" id="CHEBI:29035"/>
        <label>2</label>
    </ligand>
</feature>
<feature type="binding site" evidence="1">
    <location>
        <position position="303"/>
    </location>
    <ligand>
        <name>Mn(2+)</name>
        <dbReference type="ChEBI" id="CHEBI:29035"/>
        <label>2</label>
    </ligand>
</feature>
<feature type="binding site" evidence="1">
    <location>
        <position position="339"/>
    </location>
    <ligand>
        <name>Mn(2+)</name>
        <dbReference type="ChEBI" id="CHEBI:29035"/>
        <label>1</label>
    </ligand>
</feature>
<feature type="binding site" evidence="1">
    <location>
        <position position="340"/>
    </location>
    <ligand>
        <name>Mn(2+)</name>
        <dbReference type="ChEBI" id="CHEBI:29035"/>
        <label>1</label>
    </ligand>
</feature>
<feature type="binding site" evidence="1">
    <location>
        <position position="351"/>
    </location>
    <ligand>
        <name>Mn(2+)</name>
        <dbReference type="ChEBI" id="CHEBI:29035"/>
        <label>2</label>
    </ligand>
</feature>
<sequence length="403" mass="44155">MSKFNRIHLVVLDSVGIGAAPDANNFVNAGVPDGASDTLGHISKTVGLNVPNMAKIGLGNIPRETPLKTVAAESNPTGYATKLEEVSLGKDTMTGHWEIMGLNITEPFDTFWNGFPEEILTKIEEFSGRKVIRETNKPYSGTAVIYDFGPRQMETGELIIYTSADPVLQIAAHEDIIPLDELYRICEYARSITLERPALLGRIIARPYVGEPGNFTRTANRRDLAVSPFSPTVLDKLNEAGIDTYAVGKINDIFNGAGINHDMGHNKSNSHGIDTLLKTMGLAEFEKGFSFTNLVDFDALYGHRRNAHGYRDCLHEFDERLPEIIAAMRENDLLLITADHGNDPTYAGTDHTREYIPLLAYSPAFKGNGLIPVGHFADISATVADNFGVETAMIGESFLDKLV</sequence>
<keyword id="KW-0963">Cytoplasm</keyword>
<keyword id="KW-0413">Isomerase</keyword>
<keyword id="KW-0464">Manganese</keyword>
<keyword id="KW-0479">Metal-binding</keyword>
<keyword id="KW-1185">Reference proteome</keyword>
<organism>
    <name type="scientific">Streptococcus pneumoniae serotype 2 (strain D39 / NCTC 7466)</name>
    <dbReference type="NCBI Taxonomy" id="373153"/>
    <lineage>
        <taxon>Bacteria</taxon>
        <taxon>Bacillati</taxon>
        <taxon>Bacillota</taxon>
        <taxon>Bacilli</taxon>
        <taxon>Lactobacillales</taxon>
        <taxon>Streptococcaceae</taxon>
        <taxon>Streptococcus</taxon>
    </lineage>
</organism>
<evidence type="ECO:0000255" key="1">
    <source>
        <dbReference type="HAMAP-Rule" id="MF_00740"/>
    </source>
</evidence>
<name>DEOB_STRP2</name>
<dbReference type="EC" id="5.4.2.7" evidence="1"/>
<dbReference type="EMBL" id="CP000410">
    <property type="protein sequence ID" value="ABJ54644.1"/>
    <property type="molecule type" value="Genomic_DNA"/>
</dbReference>
<dbReference type="RefSeq" id="WP_000033108.1">
    <property type="nucleotide sequence ID" value="NZ_JAMLJR010000018.1"/>
</dbReference>
<dbReference type="SMR" id="Q04L81"/>
<dbReference type="PaxDb" id="373153-SPD_0724"/>
<dbReference type="KEGG" id="spd:SPD_0724"/>
<dbReference type="eggNOG" id="COG1015">
    <property type="taxonomic scope" value="Bacteria"/>
</dbReference>
<dbReference type="HOGENOM" id="CLU_053861_0_0_9"/>
<dbReference type="BioCyc" id="SPNE373153:G1G6V-795-MONOMER"/>
<dbReference type="UniPathway" id="UPA00002">
    <property type="reaction ID" value="UER00467"/>
</dbReference>
<dbReference type="Proteomes" id="UP000001452">
    <property type="component" value="Chromosome"/>
</dbReference>
<dbReference type="GO" id="GO:0005829">
    <property type="term" value="C:cytosol"/>
    <property type="evidence" value="ECO:0007669"/>
    <property type="project" value="TreeGrafter"/>
</dbReference>
<dbReference type="GO" id="GO:0000287">
    <property type="term" value="F:magnesium ion binding"/>
    <property type="evidence" value="ECO:0007669"/>
    <property type="project" value="InterPro"/>
</dbReference>
<dbReference type="GO" id="GO:0030145">
    <property type="term" value="F:manganese ion binding"/>
    <property type="evidence" value="ECO:0007669"/>
    <property type="project" value="UniProtKB-UniRule"/>
</dbReference>
<dbReference type="GO" id="GO:0008973">
    <property type="term" value="F:phosphopentomutase activity"/>
    <property type="evidence" value="ECO:0007669"/>
    <property type="project" value="UniProtKB-UniRule"/>
</dbReference>
<dbReference type="GO" id="GO:0006018">
    <property type="term" value="P:2-deoxyribose 1-phosphate catabolic process"/>
    <property type="evidence" value="ECO:0007669"/>
    <property type="project" value="UniProtKB-UniRule"/>
</dbReference>
<dbReference type="GO" id="GO:0006015">
    <property type="term" value="P:5-phosphoribose 1-diphosphate biosynthetic process"/>
    <property type="evidence" value="ECO:0007669"/>
    <property type="project" value="UniProtKB-UniPathway"/>
</dbReference>
<dbReference type="GO" id="GO:0043094">
    <property type="term" value="P:metabolic compound salvage"/>
    <property type="evidence" value="ECO:0007669"/>
    <property type="project" value="InterPro"/>
</dbReference>
<dbReference type="GO" id="GO:0009117">
    <property type="term" value="P:nucleotide metabolic process"/>
    <property type="evidence" value="ECO:0007669"/>
    <property type="project" value="InterPro"/>
</dbReference>
<dbReference type="CDD" id="cd16009">
    <property type="entry name" value="PPM"/>
    <property type="match status" value="1"/>
</dbReference>
<dbReference type="FunFam" id="3.30.70.1250:FF:000001">
    <property type="entry name" value="Phosphopentomutase"/>
    <property type="match status" value="1"/>
</dbReference>
<dbReference type="Gene3D" id="3.40.720.10">
    <property type="entry name" value="Alkaline Phosphatase, subunit A"/>
    <property type="match status" value="1"/>
</dbReference>
<dbReference type="Gene3D" id="3.30.70.1250">
    <property type="entry name" value="Phosphopentomutase"/>
    <property type="match status" value="1"/>
</dbReference>
<dbReference type="HAMAP" id="MF_00740">
    <property type="entry name" value="Phosphopentomut"/>
    <property type="match status" value="1"/>
</dbReference>
<dbReference type="InterPro" id="IPR017850">
    <property type="entry name" value="Alkaline_phosphatase_core_sf"/>
</dbReference>
<dbReference type="InterPro" id="IPR010045">
    <property type="entry name" value="DeoB"/>
</dbReference>
<dbReference type="InterPro" id="IPR006124">
    <property type="entry name" value="Metalloenzyme"/>
</dbReference>
<dbReference type="InterPro" id="IPR024052">
    <property type="entry name" value="Phosphopentomutase_DeoB_cap_sf"/>
</dbReference>
<dbReference type="NCBIfam" id="TIGR01696">
    <property type="entry name" value="deoB"/>
    <property type="match status" value="1"/>
</dbReference>
<dbReference type="NCBIfam" id="NF003766">
    <property type="entry name" value="PRK05362.1"/>
    <property type="match status" value="1"/>
</dbReference>
<dbReference type="PANTHER" id="PTHR21110">
    <property type="entry name" value="PHOSPHOPENTOMUTASE"/>
    <property type="match status" value="1"/>
</dbReference>
<dbReference type="PANTHER" id="PTHR21110:SF0">
    <property type="entry name" value="PHOSPHOPENTOMUTASE"/>
    <property type="match status" value="1"/>
</dbReference>
<dbReference type="Pfam" id="PF01676">
    <property type="entry name" value="Metalloenzyme"/>
    <property type="match status" value="1"/>
</dbReference>
<dbReference type="PIRSF" id="PIRSF001491">
    <property type="entry name" value="Ppentomutase"/>
    <property type="match status" value="1"/>
</dbReference>
<dbReference type="SUPFAM" id="SSF53649">
    <property type="entry name" value="Alkaline phosphatase-like"/>
    <property type="match status" value="1"/>
</dbReference>
<dbReference type="SUPFAM" id="SSF143856">
    <property type="entry name" value="DeoB insert domain-like"/>
    <property type="match status" value="1"/>
</dbReference>
<reference key="1">
    <citation type="journal article" date="2007" name="J. Bacteriol.">
        <title>Genome sequence of Avery's virulent serotype 2 strain D39 of Streptococcus pneumoniae and comparison with that of unencapsulated laboratory strain R6.</title>
        <authorList>
            <person name="Lanie J.A."/>
            <person name="Ng W.-L."/>
            <person name="Kazmierczak K.M."/>
            <person name="Andrzejewski T.M."/>
            <person name="Davidsen T.M."/>
            <person name="Wayne K.J."/>
            <person name="Tettelin H."/>
            <person name="Glass J.I."/>
            <person name="Winkler M.E."/>
        </authorList>
    </citation>
    <scope>NUCLEOTIDE SEQUENCE [LARGE SCALE GENOMIC DNA]</scope>
    <source>
        <strain>D39 / NCTC 7466</strain>
    </source>
</reference>